<gene>
    <name type="primary">CSAD</name>
    <name type="synonym">CSD</name>
</gene>
<proteinExistence type="evidence at protein level"/>
<accession>Q9Y600</accession>
<accession>A8K0U4</accession>
<accession>Q4QQH9</accession>
<accession>Q9UNJ5</accession>
<accession>Q9Y601</accession>
<protein>
    <recommendedName>
        <fullName>Cysteine sulfinic acid decarboxylase</fullName>
        <ecNumber evidence="1">4.1.1.29</ecNumber>
    </recommendedName>
    <alternativeName>
        <fullName evidence="1">Aspartate 1-decarboxylase</fullName>
        <ecNumber evidence="1">4.1.1.11</ecNumber>
    </alternativeName>
    <alternativeName>
        <fullName>Cysteine-sulfinate decarboxylase</fullName>
    </alternativeName>
    <alternativeName>
        <fullName>Sulfinoalanine decarboxylase</fullName>
    </alternativeName>
</protein>
<organism>
    <name type="scientific">Homo sapiens</name>
    <name type="common">Human</name>
    <dbReference type="NCBI Taxonomy" id="9606"/>
    <lineage>
        <taxon>Eukaryota</taxon>
        <taxon>Metazoa</taxon>
        <taxon>Chordata</taxon>
        <taxon>Craniata</taxon>
        <taxon>Vertebrata</taxon>
        <taxon>Euteleostomi</taxon>
        <taxon>Mammalia</taxon>
        <taxon>Eutheria</taxon>
        <taxon>Euarchontoglires</taxon>
        <taxon>Primates</taxon>
        <taxon>Haplorrhini</taxon>
        <taxon>Catarrhini</taxon>
        <taxon>Hominidae</taxon>
        <taxon>Homo</taxon>
    </lineage>
</organism>
<reference key="1">
    <citation type="submission" date="1998-12" db="EMBL/GenBank/DDBJ databases">
        <authorList>
            <person name="Pritchard J.E."/>
            <person name="Ramsden D.B."/>
        </authorList>
    </citation>
    <scope>NUCLEOTIDE SEQUENCE [MRNA] (ISOFORMS 1; 2 AND 3)</scope>
    <source>
        <tissue>Brain</tissue>
    </source>
</reference>
<reference key="2">
    <citation type="journal article" date="2004" name="Nat. Genet.">
        <title>Complete sequencing and characterization of 21,243 full-length human cDNAs.</title>
        <authorList>
            <person name="Ota T."/>
            <person name="Suzuki Y."/>
            <person name="Nishikawa T."/>
            <person name="Otsuki T."/>
            <person name="Sugiyama T."/>
            <person name="Irie R."/>
            <person name="Wakamatsu A."/>
            <person name="Hayashi K."/>
            <person name="Sato H."/>
            <person name="Nagai K."/>
            <person name="Kimura K."/>
            <person name="Makita H."/>
            <person name="Sekine M."/>
            <person name="Obayashi M."/>
            <person name="Nishi T."/>
            <person name="Shibahara T."/>
            <person name="Tanaka T."/>
            <person name="Ishii S."/>
            <person name="Yamamoto J."/>
            <person name="Saito K."/>
            <person name="Kawai Y."/>
            <person name="Isono Y."/>
            <person name="Nakamura Y."/>
            <person name="Nagahari K."/>
            <person name="Murakami K."/>
            <person name="Yasuda T."/>
            <person name="Iwayanagi T."/>
            <person name="Wagatsuma M."/>
            <person name="Shiratori A."/>
            <person name="Sudo H."/>
            <person name="Hosoiri T."/>
            <person name="Kaku Y."/>
            <person name="Kodaira H."/>
            <person name="Kondo H."/>
            <person name="Sugawara M."/>
            <person name="Takahashi M."/>
            <person name="Kanda K."/>
            <person name="Yokoi T."/>
            <person name="Furuya T."/>
            <person name="Kikkawa E."/>
            <person name="Omura Y."/>
            <person name="Abe K."/>
            <person name="Kamihara K."/>
            <person name="Katsuta N."/>
            <person name="Sato K."/>
            <person name="Tanikawa M."/>
            <person name="Yamazaki M."/>
            <person name="Ninomiya K."/>
            <person name="Ishibashi T."/>
            <person name="Yamashita H."/>
            <person name="Murakawa K."/>
            <person name="Fujimori K."/>
            <person name="Tanai H."/>
            <person name="Kimata M."/>
            <person name="Watanabe M."/>
            <person name="Hiraoka S."/>
            <person name="Chiba Y."/>
            <person name="Ishida S."/>
            <person name="Ono Y."/>
            <person name="Takiguchi S."/>
            <person name="Watanabe S."/>
            <person name="Yosida M."/>
            <person name="Hotuta T."/>
            <person name="Kusano J."/>
            <person name="Kanehori K."/>
            <person name="Takahashi-Fujii A."/>
            <person name="Hara H."/>
            <person name="Tanase T.-O."/>
            <person name="Nomura Y."/>
            <person name="Togiya S."/>
            <person name="Komai F."/>
            <person name="Hara R."/>
            <person name="Takeuchi K."/>
            <person name="Arita M."/>
            <person name="Imose N."/>
            <person name="Musashino K."/>
            <person name="Yuuki H."/>
            <person name="Oshima A."/>
            <person name="Sasaki N."/>
            <person name="Aotsuka S."/>
            <person name="Yoshikawa Y."/>
            <person name="Matsunawa H."/>
            <person name="Ichihara T."/>
            <person name="Shiohata N."/>
            <person name="Sano S."/>
            <person name="Moriya S."/>
            <person name="Momiyama H."/>
            <person name="Satoh N."/>
            <person name="Takami S."/>
            <person name="Terashima Y."/>
            <person name="Suzuki O."/>
            <person name="Nakagawa S."/>
            <person name="Senoh A."/>
            <person name="Mizoguchi H."/>
            <person name="Goto Y."/>
            <person name="Shimizu F."/>
            <person name="Wakebe H."/>
            <person name="Hishigaki H."/>
            <person name="Watanabe T."/>
            <person name="Sugiyama A."/>
            <person name="Takemoto M."/>
            <person name="Kawakami B."/>
            <person name="Yamazaki M."/>
            <person name="Watanabe K."/>
            <person name="Kumagai A."/>
            <person name="Itakura S."/>
            <person name="Fukuzumi Y."/>
            <person name="Fujimori Y."/>
            <person name="Komiyama M."/>
            <person name="Tashiro H."/>
            <person name="Tanigami A."/>
            <person name="Fujiwara T."/>
            <person name="Ono T."/>
            <person name="Yamada K."/>
            <person name="Fujii Y."/>
            <person name="Ozaki K."/>
            <person name="Hirao M."/>
            <person name="Ohmori Y."/>
            <person name="Kawabata A."/>
            <person name="Hikiji T."/>
            <person name="Kobatake N."/>
            <person name="Inagaki H."/>
            <person name="Ikema Y."/>
            <person name="Okamoto S."/>
            <person name="Okitani R."/>
            <person name="Kawakami T."/>
            <person name="Noguchi S."/>
            <person name="Itoh T."/>
            <person name="Shigeta K."/>
            <person name="Senba T."/>
            <person name="Matsumura K."/>
            <person name="Nakajima Y."/>
            <person name="Mizuno T."/>
            <person name="Morinaga M."/>
            <person name="Sasaki M."/>
            <person name="Togashi T."/>
            <person name="Oyama M."/>
            <person name="Hata H."/>
            <person name="Watanabe M."/>
            <person name="Komatsu T."/>
            <person name="Mizushima-Sugano J."/>
            <person name="Satoh T."/>
            <person name="Shirai Y."/>
            <person name="Takahashi Y."/>
            <person name="Nakagawa K."/>
            <person name="Okumura K."/>
            <person name="Nagase T."/>
            <person name="Nomura N."/>
            <person name="Kikuchi H."/>
            <person name="Masuho Y."/>
            <person name="Yamashita R."/>
            <person name="Nakai K."/>
            <person name="Yada T."/>
            <person name="Nakamura Y."/>
            <person name="Ohara O."/>
            <person name="Isogai T."/>
            <person name="Sugano S."/>
        </authorList>
    </citation>
    <scope>NUCLEOTIDE SEQUENCE [LARGE SCALE MRNA] (ISOFORM 2)</scope>
    <source>
        <tissue>Amygdala</tissue>
    </source>
</reference>
<reference key="3">
    <citation type="submission" date="2005-07" db="EMBL/GenBank/DDBJ databases">
        <authorList>
            <person name="Mural R.J."/>
            <person name="Istrail S."/>
            <person name="Sutton G.G."/>
            <person name="Florea L."/>
            <person name="Halpern A.L."/>
            <person name="Mobarry C.M."/>
            <person name="Lippert R."/>
            <person name="Walenz B."/>
            <person name="Shatkay H."/>
            <person name="Dew I."/>
            <person name="Miller J.R."/>
            <person name="Flanigan M.J."/>
            <person name="Edwards N.J."/>
            <person name="Bolanos R."/>
            <person name="Fasulo D."/>
            <person name="Halldorsson B.V."/>
            <person name="Hannenhalli S."/>
            <person name="Turner R."/>
            <person name="Yooseph S."/>
            <person name="Lu F."/>
            <person name="Nusskern D.R."/>
            <person name="Shue B.C."/>
            <person name="Zheng X.H."/>
            <person name="Zhong F."/>
            <person name="Delcher A.L."/>
            <person name="Huson D.H."/>
            <person name="Kravitz S.A."/>
            <person name="Mouchard L."/>
            <person name="Reinert K."/>
            <person name="Remington K.A."/>
            <person name="Clark A.G."/>
            <person name="Waterman M.S."/>
            <person name="Eichler E.E."/>
            <person name="Adams M.D."/>
            <person name="Hunkapiller M.W."/>
            <person name="Myers E.W."/>
            <person name="Venter J.C."/>
        </authorList>
    </citation>
    <scope>NUCLEOTIDE SEQUENCE [LARGE SCALE GENOMIC DNA]</scope>
</reference>
<reference key="4">
    <citation type="journal article" date="2004" name="Genome Res.">
        <title>The status, quality, and expansion of the NIH full-length cDNA project: the Mammalian Gene Collection (MGC).</title>
        <authorList>
            <consortium name="The MGC Project Team"/>
        </authorList>
    </citation>
    <scope>NUCLEOTIDE SEQUENCE [LARGE SCALE MRNA] (ISOFORM 3)</scope>
</reference>
<reference key="5">
    <citation type="journal article" date="2015" name="Neurochem. Int.">
        <title>Mammalian CSAD and GADL1 have distinct biochemical properties and patterns of brain expression.</title>
        <authorList>
            <person name="Winge I."/>
            <person name="Teigen K."/>
            <person name="Fossbakk A."/>
            <person name="Mahootchi E."/>
            <person name="Kleppe R."/>
            <person name="Skoeldberg F."/>
            <person name="Kaempe O."/>
            <person name="Haavik J."/>
        </authorList>
    </citation>
    <scope>TISSUE SPECIFICITY</scope>
</reference>
<reference key="6">
    <citation type="submission" date="2007-08" db="PDB data bank">
        <title>The crystal structure of human cysteine sulfinic acid decarboxylase (CSAD).</title>
        <authorList>
            <consortium name="Structural genomics consortium (SGC)"/>
        </authorList>
    </citation>
    <scope>X-RAY CRYSTALLOGRAPHY (1.6 ANGSTROMS) IN COMPLEX WITH PYRIDOXAL PHOSPHATE</scope>
    <scope>COFACTOR</scope>
</reference>
<feature type="chain" id="PRO_0000147006" description="Cysteine sulfinic acid decarboxylase">
    <location>
        <begin position="1"/>
        <end position="493"/>
    </location>
</feature>
<feature type="modified residue" description="N6-(pyridoxal phosphate)lysine">
    <location>
        <position position="305"/>
    </location>
</feature>
<feature type="splice variant" id="VSP_039002" description="In isoform 3." evidence="5 6">
    <original>M</original>
    <variation>MSIPLKSSFLLSYLCTLPPALLSREILM</variation>
    <location>
        <position position="1"/>
    </location>
</feature>
<feature type="splice variant" id="VSP_001307" description="In isoform 2." evidence="4 6">
    <location>
        <begin position="43"/>
        <end position="189"/>
    </location>
</feature>
<feature type="sequence conflict" description="In Ref. 1; AAD32545." evidence="7" ref="1">
    <original>E</original>
    <variation>G</variation>
    <location>
        <position position="257"/>
    </location>
</feature>
<feature type="sequence conflict" description="In Ref. 1; AAD32546." evidence="7" ref="1">
    <original>L</original>
    <variation>P</variation>
    <location>
        <position position="377"/>
    </location>
</feature>
<feature type="sequence conflict" description="In Ref. 1; AAD32544." evidence="7" ref="1">
    <original>R</original>
    <variation>G</variation>
    <location>
        <position position="433"/>
    </location>
</feature>
<feature type="helix" evidence="8">
    <location>
        <begin position="14"/>
        <end position="31"/>
    </location>
</feature>
<feature type="turn" evidence="8">
    <location>
        <begin position="32"/>
        <end position="34"/>
    </location>
</feature>
<feature type="helix" evidence="8">
    <location>
        <begin position="35"/>
        <end position="37"/>
    </location>
</feature>
<feature type="helix" evidence="8">
    <location>
        <begin position="49"/>
        <end position="56"/>
    </location>
</feature>
<feature type="helix" evidence="8">
    <location>
        <begin position="67"/>
        <end position="80"/>
    </location>
</feature>
<feature type="strand" evidence="8">
    <location>
        <begin position="89"/>
        <end position="93"/>
    </location>
</feature>
<feature type="helix" evidence="8">
    <location>
        <begin position="99"/>
        <end position="111"/>
    </location>
</feature>
<feature type="turn" evidence="8">
    <location>
        <begin position="118"/>
        <end position="120"/>
    </location>
</feature>
<feature type="helix" evidence="8">
    <location>
        <begin position="122"/>
        <end position="139"/>
    </location>
</feature>
<feature type="strand" evidence="8">
    <location>
        <begin position="145"/>
        <end position="151"/>
    </location>
</feature>
<feature type="helix" evidence="8">
    <location>
        <begin position="152"/>
        <end position="167"/>
    </location>
</feature>
<feature type="helix" evidence="8">
    <location>
        <begin position="171"/>
        <end position="174"/>
    </location>
</feature>
<feature type="helix" evidence="8">
    <location>
        <begin position="176"/>
        <end position="178"/>
    </location>
</feature>
<feature type="strand" evidence="8">
    <location>
        <begin position="182"/>
        <end position="187"/>
    </location>
</feature>
<feature type="helix" evidence="8">
    <location>
        <begin position="193"/>
        <end position="200"/>
    </location>
</feature>
<feature type="helix" evidence="8">
    <location>
        <begin position="205"/>
        <end position="207"/>
    </location>
</feature>
<feature type="strand" evidence="8">
    <location>
        <begin position="208"/>
        <end position="211"/>
    </location>
</feature>
<feature type="helix" evidence="8">
    <location>
        <begin position="221"/>
        <end position="233"/>
    </location>
</feature>
<feature type="strand" evidence="8">
    <location>
        <begin position="237"/>
        <end position="246"/>
    </location>
</feature>
<feature type="turn" evidence="8">
    <location>
        <begin position="248"/>
        <end position="250"/>
    </location>
</feature>
<feature type="helix" evidence="8">
    <location>
        <begin position="256"/>
        <end position="266"/>
    </location>
</feature>
<feature type="strand" evidence="8">
    <location>
        <begin position="269"/>
        <end position="274"/>
    </location>
</feature>
<feature type="helix" evidence="8">
    <location>
        <begin position="277"/>
        <end position="282"/>
    </location>
</feature>
<feature type="turn" evidence="8">
    <location>
        <begin position="284"/>
        <end position="286"/>
    </location>
</feature>
<feature type="helix" evidence="8">
    <location>
        <begin position="287"/>
        <end position="290"/>
    </location>
</feature>
<feature type="helix" evidence="8">
    <location>
        <begin position="293"/>
        <end position="295"/>
    </location>
</feature>
<feature type="strand" evidence="8">
    <location>
        <begin position="297"/>
        <end position="301"/>
    </location>
</feature>
<feature type="strand" evidence="8">
    <location>
        <begin position="314"/>
        <end position="319"/>
    </location>
</feature>
<feature type="helix" evidence="8">
    <location>
        <begin position="324"/>
        <end position="329"/>
    </location>
</feature>
<feature type="helix" evidence="8">
    <location>
        <begin position="345"/>
        <end position="347"/>
    </location>
</feature>
<feature type="helix" evidence="8">
    <location>
        <begin position="350"/>
        <end position="352"/>
    </location>
</feature>
<feature type="helix" evidence="8">
    <location>
        <begin position="362"/>
        <end position="396"/>
    </location>
</feature>
<feature type="strand" evidence="8">
    <location>
        <begin position="401"/>
        <end position="405"/>
    </location>
</feature>
<feature type="strand" evidence="8">
    <location>
        <begin position="408"/>
        <end position="416"/>
    </location>
</feature>
<feature type="helix" evidence="8">
    <location>
        <begin position="419"/>
        <end position="421"/>
    </location>
</feature>
<feature type="helix" evidence="8">
    <location>
        <begin position="430"/>
        <end position="435"/>
    </location>
</feature>
<feature type="helix" evidence="8">
    <location>
        <begin position="437"/>
        <end position="448"/>
    </location>
</feature>
<feature type="strand" evidence="8">
    <location>
        <begin position="452"/>
        <end position="458"/>
    </location>
</feature>
<feature type="strand" evidence="8">
    <location>
        <begin position="461"/>
        <end position="468"/>
    </location>
</feature>
<feature type="helix" evidence="8">
    <location>
        <begin position="476"/>
        <end position="490"/>
    </location>
</feature>
<feature type="sequence conflict" description="In Ref. 4; AAH98342." evidence="7" ref="4">
    <original>F</original>
    <variation>S</variation>
    <location sequence="Q9Y600-3">
        <position position="9"/>
    </location>
</feature>
<keyword id="KW-0002">3D-structure</keyword>
<keyword id="KW-0025">Alternative splicing</keyword>
<keyword id="KW-0210">Decarboxylase</keyword>
<keyword id="KW-0456">Lyase</keyword>
<keyword id="KW-1267">Proteomics identification</keyword>
<keyword id="KW-0663">Pyridoxal phosphate</keyword>
<keyword id="KW-1185">Reference proteome</keyword>
<comment type="function">
    <text evidence="1">Catalyzes the decarboxylation of L-aspartate, 3-sulfino-L-alanine (cysteine sulfinic acid), and L-cysteate to beta-alanine, hypotaurine and taurine, respectively. The preferred substrate is 3-sulfino-L-alanine. Does not exhibit any decarboxylation activity toward glutamate.</text>
</comment>
<comment type="catalytic activity">
    <reaction evidence="1">
        <text>L-aspartate + H(+) = beta-alanine + CO2</text>
        <dbReference type="Rhea" id="RHEA:19497"/>
        <dbReference type="ChEBI" id="CHEBI:15378"/>
        <dbReference type="ChEBI" id="CHEBI:16526"/>
        <dbReference type="ChEBI" id="CHEBI:29991"/>
        <dbReference type="ChEBI" id="CHEBI:57966"/>
        <dbReference type="EC" id="4.1.1.11"/>
    </reaction>
</comment>
<comment type="catalytic activity">
    <reaction evidence="1">
        <text>3-sulfino-L-alanine + H(+) = hypotaurine + CO2</text>
        <dbReference type="Rhea" id="RHEA:16877"/>
        <dbReference type="ChEBI" id="CHEBI:15378"/>
        <dbReference type="ChEBI" id="CHEBI:16526"/>
        <dbReference type="ChEBI" id="CHEBI:57853"/>
        <dbReference type="ChEBI" id="CHEBI:61085"/>
        <dbReference type="EC" id="4.1.1.29"/>
    </reaction>
</comment>
<comment type="catalytic activity">
    <reaction evidence="1">
        <text>L-cysteate + H(+) = taurine + CO2</text>
        <dbReference type="Rhea" id="RHEA:25221"/>
        <dbReference type="ChEBI" id="CHEBI:15378"/>
        <dbReference type="ChEBI" id="CHEBI:16526"/>
        <dbReference type="ChEBI" id="CHEBI:58090"/>
        <dbReference type="ChEBI" id="CHEBI:507393"/>
        <dbReference type="EC" id="4.1.1.29"/>
    </reaction>
</comment>
<comment type="cofactor">
    <cofactor evidence="3">
        <name>pyridoxal 5'-phosphate</name>
        <dbReference type="ChEBI" id="CHEBI:597326"/>
    </cofactor>
</comment>
<comment type="pathway">
    <text>Organosulfur biosynthesis; taurine biosynthesis; hypotaurine from L-cysteine: step 2/2.</text>
</comment>
<comment type="subunit">
    <text evidence="3">Homodimer.</text>
</comment>
<comment type="alternative products">
    <event type="alternative splicing"/>
    <isoform>
        <id>Q9Y600-1</id>
        <name>1</name>
        <name>Long</name>
        <sequence type="displayed"/>
    </isoform>
    <isoform>
        <id>Q9Y600-2</id>
        <name>2</name>
        <name>Short</name>
        <sequence type="described" ref="VSP_001307"/>
    </isoform>
    <isoform>
        <id>Q9Y600-3</id>
        <name>3</name>
        <sequence type="described" ref="VSP_039002"/>
    </isoform>
</comment>
<comment type="tissue specificity">
    <text evidence="2">Expressed in liver and brain. Also expressed in both astrocytes and neurons, but lower levels are expressed in astrocytes.</text>
</comment>
<comment type="similarity">
    <text evidence="7">Belongs to the group II decarboxylase family.</text>
</comment>
<comment type="sequence caution" evidence="7">
    <conflict type="erroneous initiation">
        <sequence resource="EMBL-CDS" id="AAD32546"/>
    </conflict>
    <text>Truncated N-terminus.</text>
</comment>
<comment type="sequence caution" evidence="7">
    <conflict type="erroneous initiation">
        <sequence resource="EMBL-CDS" id="AAH98278"/>
    </conflict>
    <text>Truncated N-terminus.</text>
</comment>
<comment type="sequence caution" evidence="7">
    <conflict type="erroneous initiation">
        <sequence resource="EMBL-CDS" id="AAH98342"/>
    </conflict>
    <text>Truncated N-terminus.</text>
</comment>
<comment type="sequence caution" evidence="7">
    <conflict type="erroneous initiation">
        <sequence resource="EMBL-CDS" id="AAH99717"/>
    </conflict>
    <text>Truncated N-terminus.</text>
</comment>
<comment type="sequence caution" evidence="7">
    <conflict type="erroneous initiation">
        <sequence resource="EMBL-CDS" id="AAI05919"/>
    </conflict>
    <text>Truncated N-terminus.</text>
</comment>
<name>CSAD_HUMAN</name>
<evidence type="ECO:0000250" key="1">
    <source>
        <dbReference type="UniProtKB" id="Q9DBE0"/>
    </source>
</evidence>
<evidence type="ECO:0000269" key="2">
    <source>
    </source>
</evidence>
<evidence type="ECO:0000269" key="3">
    <source ref="6"/>
</evidence>
<evidence type="ECO:0000303" key="4">
    <source>
    </source>
</evidence>
<evidence type="ECO:0000303" key="5">
    <source>
    </source>
</evidence>
<evidence type="ECO:0000303" key="6">
    <source ref="1"/>
</evidence>
<evidence type="ECO:0000305" key="7"/>
<evidence type="ECO:0007829" key="8">
    <source>
        <dbReference type="PDB" id="2JIS"/>
    </source>
</evidence>
<sequence length="493" mass="55023">MADSEALPSLAGDPVAVEALLRAVFGVVVDEAIQKGTSVSQKVCEWKEPEELKQLLDLELRSQGESQKQILERCRAVIRYSVKTGHPRFFNQLFSGLDPHALAGRIITESLNTSQYTYEIAPVFVLMEEEVLRKLRALVGWSSGDGIFCPGGSISNMYAVNLARYQRYPDCKQRGLRTLPPLALFTSKECHYSIQKGAAFLGLGTDSVRVVKADERGKMVPEDLERQIGMAEAEGAVPFLVSATSGTTVLGAFDPLEAIADVCQRHGLWLHVDAAWGGSVLLSQTHRHLLDGIQRADSVAWNPHKLLAAGLQCSALLLQDTSNLLKRCHGSQASYLFQQDKFYDVALDTGDKVVQCGRRVDCLKLWLMWKAQGDQGLERRIDQAFVLARYLVEEMKKREGFELVMEPEFVNVCFWFVPPSLRGKQESPDYHERLSKVAPVLKERMVKEGSMMIGYQPHGTRGNFFRVVVANSALTCADMDFLLNELERLGQDL</sequence>
<dbReference type="EC" id="4.1.1.29" evidence="1"/>
<dbReference type="EC" id="4.1.1.11" evidence="1"/>
<dbReference type="EMBL" id="AF116546">
    <property type="protein sequence ID" value="AAD32544.1"/>
    <property type="molecule type" value="mRNA"/>
</dbReference>
<dbReference type="EMBL" id="AF116547">
    <property type="protein sequence ID" value="AAD32545.1"/>
    <property type="molecule type" value="mRNA"/>
</dbReference>
<dbReference type="EMBL" id="AF116548">
    <property type="protein sequence ID" value="AAD32546.1"/>
    <property type="status" value="ALT_INIT"/>
    <property type="molecule type" value="mRNA"/>
</dbReference>
<dbReference type="EMBL" id="AK289659">
    <property type="protein sequence ID" value="BAF82348.1"/>
    <property type="molecule type" value="mRNA"/>
</dbReference>
<dbReference type="EMBL" id="CH471054">
    <property type="protein sequence ID" value="EAW96670.1"/>
    <property type="molecule type" value="Genomic_DNA"/>
</dbReference>
<dbReference type="EMBL" id="BC098278">
    <property type="protein sequence ID" value="AAH98278.1"/>
    <property type="status" value="ALT_INIT"/>
    <property type="molecule type" value="mRNA"/>
</dbReference>
<dbReference type="EMBL" id="BC098342">
    <property type="protein sequence ID" value="AAH98342.1"/>
    <property type="status" value="ALT_INIT"/>
    <property type="molecule type" value="mRNA"/>
</dbReference>
<dbReference type="EMBL" id="BC099717">
    <property type="protein sequence ID" value="AAH99717.1"/>
    <property type="status" value="ALT_INIT"/>
    <property type="molecule type" value="mRNA"/>
</dbReference>
<dbReference type="EMBL" id="BC105918">
    <property type="protein sequence ID" value="AAI05919.1"/>
    <property type="status" value="ALT_INIT"/>
    <property type="molecule type" value="mRNA"/>
</dbReference>
<dbReference type="CCDS" id="CCDS58235.1">
    <molecule id="Q9Y600-1"/>
</dbReference>
<dbReference type="CCDS" id="CCDS8848.2">
    <molecule id="Q9Y600-3"/>
</dbReference>
<dbReference type="RefSeq" id="NP_001231634.1">
    <molecule id="Q9Y600-1"/>
    <property type="nucleotide sequence ID" value="NM_001244705.2"/>
</dbReference>
<dbReference type="RefSeq" id="NP_057073.4">
    <molecule id="Q9Y600-3"/>
    <property type="nucleotide sequence ID" value="NM_015989.4"/>
</dbReference>
<dbReference type="RefSeq" id="XP_011536748.1">
    <property type="nucleotide sequence ID" value="XM_011538446.2"/>
</dbReference>
<dbReference type="RefSeq" id="XP_024304780.2">
    <molecule id="Q9Y600-1"/>
    <property type="nucleotide sequence ID" value="XM_024449012.2"/>
</dbReference>
<dbReference type="RefSeq" id="XP_024304782.1">
    <molecule id="Q9Y600-1"/>
    <property type="nucleotide sequence ID" value="XM_024449014.2"/>
</dbReference>
<dbReference type="RefSeq" id="XP_047284917.1">
    <molecule id="Q9Y600-3"/>
    <property type="nucleotide sequence ID" value="XM_047428961.1"/>
</dbReference>
<dbReference type="RefSeq" id="XP_054228182.1">
    <molecule id="Q9Y600-3"/>
    <property type="nucleotide sequence ID" value="XM_054372207.1"/>
</dbReference>
<dbReference type="RefSeq" id="XP_054228183.1">
    <molecule id="Q9Y600-1"/>
    <property type="nucleotide sequence ID" value="XM_054372208.1"/>
</dbReference>
<dbReference type="PDB" id="2JIS">
    <property type="method" value="X-ray"/>
    <property type="resolution" value="1.60 A"/>
    <property type="chains" value="A/B=1-493"/>
</dbReference>
<dbReference type="PDBsum" id="2JIS"/>
<dbReference type="SMR" id="Q9Y600"/>
<dbReference type="BioGRID" id="119512">
    <property type="interactions" value="18"/>
</dbReference>
<dbReference type="FunCoup" id="Q9Y600">
    <property type="interactions" value="461"/>
</dbReference>
<dbReference type="IntAct" id="Q9Y600">
    <property type="interactions" value="12"/>
</dbReference>
<dbReference type="MINT" id="Q9Y600"/>
<dbReference type="STRING" id="9606.ENSP00000267085"/>
<dbReference type="DrugBank" id="DB00151">
    <property type="generic name" value="Cysteine"/>
</dbReference>
<dbReference type="DrugBank" id="DB00114">
    <property type="generic name" value="Pyridoxal phosphate"/>
</dbReference>
<dbReference type="iPTMnet" id="Q9Y600"/>
<dbReference type="PhosphoSitePlus" id="Q9Y600"/>
<dbReference type="BioMuta" id="CSAD"/>
<dbReference type="DMDM" id="116241317"/>
<dbReference type="jPOST" id="Q9Y600"/>
<dbReference type="MassIVE" id="Q9Y600"/>
<dbReference type="PaxDb" id="9606-ENSP00000267085"/>
<dbReference type="PeptideAtlas" id="Q9Y600"/>
<dbReference type="ProteomicsDB" id="86557">
    <molecule id="Q9Y600-1"/>
</dbReference>
<dbReference type="ProteomicsDB" id="86558">
    <molecule id="Q9Y600-2"/>
</dbReference>
<dbReference type="ProteomicsDB" id="86559">
    <molecule id="Q9Y600-3"/>
</dbReference>
<dbReference type="Antibodypedia" id="26909">
    <property type="antibodies" value="182 antibodies from 25 providers"/>
</dbReference>
<dbReference type="DNASU" id="51380"/>
<dbReference type="Ensembl" id="ENST00000267085.8">
    <molecule id="Q9Y600-3"/>
    <property type="protein sequence ID" value="ENSP00000267085.3"/>
    <property type="gene ID" value="ENSG00000139631.20"/>
</dbReference>
<dbReference type="Ensembl" id="ENST00000379846.5">
    <molecule id="Q9Y600-2"/>
    <property type="protein sequence ID" value="ENSP00000369175.1"/>
    <property type="gene ID" value="ENSG00000139631.20"/>
</dbReference>
<dbReference type="Ensembl" id="ENST00000444623.6">
    <molecule id="Q9Y600-1"/>
    <property type="protein sequence ID" value="ENSP00000415485.1"/>
    <property type="gene ID" value="ENSG00000139631.20"/>
</dbReference>
<dbReference type="Ensembl" id="ENST00000453446.6">
    <molecule id="Q9Y600-1"/>
    <property type="protein sequence ID" value="ENSP00000410648.2"/>
    <property type="gene ID" value="ENSG00000139631.20"/>
</dbReference>
<dbReference type="GeneID" id="51380"/>
<dbReference type="KEGG" id="hsa:51380"/>
<dbReference type="MANE-Select" id="ENST00000444623.6">
    <property type="protein sequence ID" value="ENSP00000415485.1"/>
    <property type="RefSeq nucleotide sequence ID" value="NM_001244705.2"/>
    <property type="RefSeq protein sequence ID" value="NP_001231634.1"/>
</dbReference>
<dbReference type="UCSC" id="uc001sbz.4">
    <molecule id="Q9Y600-1"/>
    <property type="organism name" value="human"/>
</dbReference>
<dbReference type="AGR" id="HGNC:18966"/>
<dbReference type="CTD" id="51380"/>
<dbReference type="DisGeNET" id="51380"/>
<dbReference type="GeneCards" id="CSAD"/>
<dbReference type="HGNC" id="HGNC:18966">
    <property type="gene designation" value="CSAD"/>
</dbReference>
<dbReference type="HPA" id="ENSG00000139631">
    <property type="expression patterns" value="Low tissue specificity"/>
</dbReference>
<dbReference type="MIM" id="616569">
    <property type="type" value="gene"/>
</dbReference>
<dbReference type="neXtProt" id="NX_Q9Y600"/>
<dbReference type="OpenTargets" id="ENSG00000139631"/>
<dbReference type="PharmGKB" id="PA38771"/>
<dbReference type="VEuPathDB" id="HostDB:ENSG00000139631"/>
<dbReference type="eggNOG" id="KOG0629">
    <property type="taxonomic scope" value="Eukaryota"/>
</dbReference>
<dbReference type="GeneTree" id="ENSGT00940000158240"/>
<dbReference type="HOGENOM" id="CLU_011856_0_0_1"/>
<dbReference type="InParanoid" id="Q9Y600"/>
<dbReference type="OMA" id="CVDLHKW"/>
<dbReference type="OrthoDB" id="392571at2759"/>
<dbReference type="PAN-GO" id="Q9Y600">
    <property type="GO annotations" value="3 GO annotations based on evolutionary models"/>
</dbReference>
<dbReference type="PhylomeDB" id="Q9Y600"/>
<dbReference type="TreeFam" id="TF314688"/>
<dbReference type="BioCyc" id="MetaCyc:HS06642-MONOMER"/>
<dbReference type="BRENDA" id="4.1.1.29">
    <property type="organism ID" value="2681"/>
</dbReference>
<dbReference type="PathwayCommons" id="Q9Y600"/>
<dbReference type="Reactome" id="R-HSA-1614558">
    <property type="pathway name" value="Degradation of cysteine and homocysteine"/>
</dbReference>
<dbReference type="SignaLink" id="Q9Y600"/>
<dbReference type="SIGNOR" id="Q9Y600"/>
<dbReference type="UniPathway" id="UPA00012">
    <property type="reaction ID" value="UER00538"/>
</dbReference>
<dbReference type="BioGRID-ORCS" id="51380">
    <property type="hits" value="17 hits in 1159 CRISPR screens"/>
</dbReference>
<dbReference type="ChiTaRS" id="CSAD">
    <property type="organism name" value="human"/>
</dbReference>
<dbReference type="EvolutionaryTrace" id="Q9Y600"/>
<dbReference type="GenomeRNAi" id="51380"/>
<dbReference type="Pharos" id="Q9Y600">
    <property type="development level" value="Tbio"/>
</dbReference>
<dbReference type="PRO" id="PR:Q9Y600"/>
<dbReference type="Proteomes" id="UP000005640">
    <property type="component" value="Chromosome 12"/>
</dbReference>
<dbReference type="RNAct" id="Q9Y600">
    <property type="molecule type" value="protein"/>
</dbReference>
<dbReference type="Bgee" id="ENSG00000139631">
    <property type="expression patterns" value="Expressed in right uterine tube and 175 other cell types or tissues"/>
</dbReference>
<dbReference type="ExpressionAtlas" id="Q9Y600">
    <property type="expression patterns" value="baseline and differential"/>
</dbReference>
<dbReference type="GO" id="GO:0005737">
    <property type="term" value="C:cytoplasm"/>
    <property type="evidence" value="ECO:0000250"/>
    <property type="project" value="UniProtKB"/>
</dbReference>
<dbReference type="GO" id="GO:0004068">
    <property type="term" value="F:aspartate 1-decarboxylase activity"/>
    <property type="evidence" value="ECO:0007669"/>
    <property type="project" value="UniProtKB-EC"/>
</dbReference>
<dbReference type="GO" id="GO:0030170">
    <property type="term" value="F:pyridoxal phosphate binding"/>
    <property type="evidence" value="ECO:0007669"/>
    <property type="project" value="InterPro"/>
</dbReference>
<dbReference type="GO" id="GO:0004782">
    <property type="term" value="F:sulfinoalanine decarboxylase activity"/>
    <property type="evidence" value="ECO:0000250"/>
    <property type="project" value="UniProtKB"/>
</dbReference>
<dbReference type="GO" id="GO:0019449">
    <property type="term" value="P:L-cysteine catabolic process to hypotaurine"/>
    <property type="evidence" value="ECO:0000250"/>
    <property type="project" value="UniProtKB"/>
</dbReference>
<dbReference type="GO" id="GO:0019452">
    <property type="term" value="P:L-cysteine catabolic process to taurine"/>
    <property type="evidence" value="ECO:0000250"/>
    <property type="project" value="UniProtKB"/>
</dbReference>
<dbReference type="GO" id="GO:0042412">
    <property type="term" value="P:taurine biosynthetic process"/>
    <property type="evidence" value="ECO:0000250"/>
    <property type="project" value="UniProt"/>
</dbReference>
<dbReference type="CDD" id="cd06450">
    <property type="entry name" value="DOPA_deC_like"/>
    <property type="match status" value="1"/>
</dbReference>
<dbReference type="FunFam" id="3.40.640.10:FF:000016">
    <property type="entry name" value="Glutamate decarboxylase like 1"/>
    <property type="match status" value="1"/>
</dbReference>
<dbReference type="Gene3D" id="3.90.1150.170">
    <property type="match status" value="1"/>
</dbReference>
<dbReference type="Gene3D" id="3.40.640.10">
    <property type="entry name" value="Type I PLP-dependent aspartate aminotransferase-like (Major domain)"/>
    <property type="match status" value="1"/>
</dbReference>
<dbReference type="InterPro" id="IPR002129">
    <property type="entry name" value="PyrdxlP-dep_de-COase"/>
</dbReference>
<dbReference type="InterPro" id="IPR015424">
    <property type="entry name" value="PyrdxlP-dep_Trfase"/>
</dbReference>
<dbReference type="InterPro" id="IPR015421">
    <property type="entry name" value="PyrdxlP-dep_Trfase_major"/>
</dbReference>
<dbReference type="PANTHER" id="PTHR45677:SF8">
    <property type="entry name" value="CYSTEINE SULFINIC ACID DECARBOXYLASE"/>
    <property type="match status" value="1"/>
</dbReference>
<dbReference type="PANTHER" id="PTHR45677">
    <property type="entry name" value="GLUTAMATE DECARBOXYLASE-RELATED"/>
    <property type="match status" value="1"/>
</dbReference>
<dbReference type="Pfam" id="PF00282">
    <property type="entry name" value="Pyridoxal_deC"/>
    <property type="match status" value="1"/>
</dbReference>
<dbReference type="SUPFAM" id="SSF53383">
    <property type="entry name" value="PLP-dependent transferases"/>
    <property type="match status" value="1"/>
</dbReference>